<comment type="function">
    <text>Potential calcium-dependent cell-adhesion protein. May be involved in the establishment and maintenance of specific neuronal connections in the brain.</text>
</comment>
<comment type="subcellular location">
    <subcellularLocation>
        <location evidence="1">Cell membrane</location>
        <topology evidence="1">Single-pass type I membrane protein</topology>
    </subcellularLocation>
</comment>
<proteinExistence type="evidence at protein level"/>
<feature type="signal peptide" evidence="2">
    <location>
        <begin position="1"/>
        <end position="27"/>
    </location>
</feature>
<feature type="chain" id="PRO_0000003920" description="Protocadherin beta-4">
    <location>
        <begin position="28"/>
        <end position="795"/>
    </location>
</feature>
<feature type="topological domain" description="Extracellular" evidence="2">
    <location>
        <begin position="28"/>
        <end position="689"/>
    </location>
</feature>
<feature type="transmembrane region" description="Helical" evidence="2">
    <location>
        <begin position="690"/>
        <end position="710"/>
    </location>
</feature>
<feature type="topological domain" description="Cytoplasmic" evidence="2">
    <location>
        <begin position="711"/>
        <end position="795"/>
    </location>
</feature>
<feature type="domain" description="Cadherin 1" evidence="3">
    <location>
        <begin position="34"/>
        <end position="132"/>
    </location>
</feature>
<feature type="domain" description="Cadherin 2" evidence="3">
    <location>
        <begin position="137"/>
        <end position="241"/>
    </location>
</feature>
<feature type="domain" description="Cadherin 3" evidence="3">
    <location>
        <begin position="246"/>
        <end position="346"/>
    </location>
</feature>
<feature type="domain" description="Cadherin 4" evidence="3">
    <location>
        <begin position="351"/>
        <end position="450"/>
    </location>
</feature>
<feature type="domain" description="Cadherin 5" evidence="3">
    <location>
        <begin position="455"/>
        <end position="560"/>
    </location>
</feature>
<feature type="domain" description="Cadherin 6" evidence="3">
    <location>
        <begin position="567"/>
        <end position="670"/>
    </location>
</feature>
<feature type="glycosylation site" description="N-linked (GlcNAc...) asparagine" evidence="2">
    <location>
        <position position="183"/>
    </location>
</feature>
<feature type="glycosylation site" description="N-linked (GlcNAc...) asparagine" evidence="2">
    <location>
        <position position="417"/>
    </location>
</feature>
<feature type="glycosylation site" description="N-linked (GlcNAc...) asparagine" evidence="2">
    <location>
        <position position="435"/>
    </location>
</feature>
<feature type="glycosylation site" description="N-linked (GlcNAc...) asparagine" evidence="2">
    <location>
        <position position="566"/>
    </location>
</feature>
<feature type="sequence variant" id="VAR_048548" description="In dbSNP:rs34350292.">
    <original>K</original>
    <variation>R</variation>
    <location>
        <position position="168"/>
    </location>
</feature>
<feature type="sequence variant" id="VAR_048549" description="In dbSNP:rs3733697.">
    <original>P</original>
    <variation>L</variation>
    <location>
        <position position="255"/>
    </location>
</feature>
<feature type="sequence variant" id="VAR_048550" description="In dbSNP:rs3733698.">
    <original>P</original>
    <variation>S</variation>
    <location>
        <position position="255"/>
    </location>
</feature>
<feature type="sequence variant" id="VAR_021878" description="In dbSNP:rs3776099.">
    <original>A</original>
    <variation>T</variation>
    <location>
        <position position="421"/>
    </location>
</feature>
<feature type="sequence variant" id="VAR_048551" description="In dbSNP:rs246669.">
    <original>T</original>
    <variation>A</variation>
    <location>
        <position position="553"/>
    </location>
</feature>
<organism>
    <name type="scientific">Homo sapiens</name>
    <name type="common">Human</name>
    <dbReference type="NCBI Taxonomy" id="9606"/>
    <lineage>
        <taxon>Eukaryota</taxon>
        <taxon>Metazoa</taxon>
        <taxon>Chordata</taxon>
        <taxon>Craniata</taxon>
        <taxon>Vertebrata</taxon>
        <taxon>Euteleostomi</taxon>
        <taxon>Mammalia</taxon>
        <taxon>Eutheria</taxon>
        <taxon>Euarchontoglires</taxon>
        <taxon>Primates</taxon>
        <taxon>Haplorrhini</taxon>
        <taxon>Catarrhini</taxon>
        <taxon>Hominidae</taxon>
        <taxon>Homo</taxon>
    </lineage>
</organism>
<evidence type="ECO:0000250" key="1"/>
<evidence type="ECO:0000255" key="2"/>
<evidence type="ECO:0000255" key="3">
    <source>
        <dbReference type="PROSITE-ProRule" id="PRU00043"/>
    </source>
</evidence>
<protein>
    <recommendedName>
        <fullName>Protocadherin beta-4</fullName>
        <shortName>PCDH-beta-4</shortName>
    </recommendedName>
</protein>
<name>PCDB4_HUMAN</name>
<dbReference type="EMBL" id="AF152497">
    <property type="protein sequence ID" value="AAD43758.1"/>
    <property type="molecule type" value="mRNA"/>
</dbReference>
<dbReference type="EMBL" id="AF217754">
    <property type="protein sequence ID" value="AAK51621.1"/>
    <property type="molecule type" value="mRNA"/>
</dbReference>
<dbReference type="EMBL" id="BC098139">
    <property type="protein sequence ID" value="AAH98139.1"/>
    <property type="molecule type" value="mRNA"/>
</dbReference>
<dbReference type="EMBL" id="BC098346">
    <property type="protein sequence ID" value="AAH98346.1"/>
    <property type="molecule type" value="mRNA"/>
</dbReference>
<dbReference type="CCDS" id="CCDS4246.1"/>
<dbReference type="RefSeq" id="NP_061761.1">
    <property type="nucleotide sequence ID" value="NM_018938.4"/>
</dbReference>
<dbReference type="SMR" id="Q9Y5E5"/>
<dbReference type="BioGRID" id="121071">
    <property type="interactions" value="2"/>
</dbReference>
<dbReference type="FunCoup" id="Q9Y5E5">
    <property type="interactions" value="19"/>
</dbReference>
<dbReference type="IntAct" id="Q9Y5E5">
    <property type="interactions" value="2"/>
</dbReference>
<dbReference type="STRING" id="9606.ENSP00000194152"/>
<dbReference type="GlyCosmos" id="Q9Y5E5">
    <property type="glycosylation" value="4 sites, No reported glycans"/>
</dbReference>
<dbReference type="GlyGen" id="Q9Y5E5">
    <property type="glycosylation" value="5 sites, 1 O-linked glycan (1 site)"/>
</dbReference>
<dbReference type="iPTMnet" id="Q9Y5E5"/>
<dbReference type="PhosphoSitePlus" id="Q9Y5E5"/>
<dbReference type="BioMuta" id="PCDHB4"/>
<dbReference type="DMDM" id="13431376"/>
<dbReference type="jPOST" id="Q9Y5E5"/>
<dbReference type="MassIVE" id="Q9Y5E5"/>
<dbReference type="PaxDb" id="9606-ENSP00000194152"/>
<dbReference type="PeptideAtlas" id="Q9Y5E5"/>
<dbReference type="ProteomicsDB" id="86344"/>
<dbReference type="TopDownProteomics" id="Q9Y5E5"/>
<dbReference type="Antibodypedia" id="2259">
    <property type="antibodies" value="29 antibodies from 11 providers"/>
</dbReference>
<dbReference type="DNASU" id="56131"/>
<dbReference type="Ensembl" id="ENST00000194152.4">
    <property type="protein sequence ID" value="ENSP00000194152.1"/>
    <property type="gene ID" value="ENSG00000081818.4"/>
</dbReference>
<dbReference type="Ensembl" id="ENST00000708352.1">
    <property type="protein sequence ID" value="ENSP00000517186.1"/>
    <property type="gene ID" value="ENSG00000291676.1"/>
</dbReference>
<dbReference type="GeneID" id="56131"/>
<dbReference type="KEGG" id="hsa:56131"/>
<dbReference type="MANE-Select" id="ENST00000194152.4">
    <property type="protein sequence ID" value="ENSP00000194152.1"/>
    <property type="RefSeq nucleotide sequence ID" value="NM_018938.4"/>
    <property type="RefSeq protein sequence ID" value="NP_061761.1"/>
</dbReference>
<dbReference type="UCSC" id="uc003lip.3">
    <property type="organism name" value="human"/>
</dbReference>
<dbReference type="AGR" id="HGNC:8689"/>
<dbReference type="CTD" id="56131"/>
<dbReference type="DisGeNET" id="56131"/>
<dbReference type="GeneCards" id="PCDHB4"/>
<dbReference type="HGNC" id="HGNC:8689">
    <property type="gene designation" value="PCDHB4"/>
</dbReference>
<dbReference type="HPA" id="ENSG00000081818">
    <property type="expression patterns" value="Low tissue specificity"/>
</dbReference>
<dbReference type="MalaCards" id="PCDHB4"/>
<dbReference type="MIM" id="604967">
    <property type="type" value="gene"/>
</dbReference>
<dbReference type="MIM" id="606330">
    <property type="type" value="gene"/>
</dbReference>
<dbReference type="neXtProt" id="NX_Q9Y5E5"/>
<dbReference type="OpenTargets" id="ENSG00000081818"/>
<dbReference type="PharmGKB" id="PA33038"/>
<dbReference type="VEuPathDB" id="HostDB:ENSG00000081818"/>
<dbReference type="eggNOG" id="KOG3594">
    <property type="taxonomic scope" value="Eukaryota"/>
</dbReference>
<dbReference type="GeneTree" id="ENSGT00940000161185"/>
<dbReference type="HOGENOM" id="CLU_006480_3_0_1"/>
<dbReference type="InParanoid" id="Q9Y5E5"/>
<dbReference type="OMA" id="FVHTPYG"/>
<dbReference type="OrthoDB" id="6252479at2759"/>
<dbReference type="PAN-GO" id="Q9Y5E5">
    <property type="GO annotations" value="2 GO annotations based on evolutionary models"/>
</dbReference>
<dbReference type="PhylomeDB" id="Q9Y5E5"/>
<dbReference type="TreeFam" id="TF332299"/>
<dbReference type="PathwayCommons" id="Q9Y5E5"/>
<dbReference type="BioGRID-ORCS" id="56131">
    <property type="hits" value="11 hits in 1104 CRISPR screens"/>
</dbReference>
<dbReference type="ChiTaRS" id="PCDHB4">
    <property type="organism name" value="human"/>
</dbReference>
<dbReference type="GeneWiki" id="PCDHB4"/>
<dbReference type="GenomeRNAi" id="56131"/>
<dbReference type="Pharos" id="Q9Y5E5">
    <property type="development level" value="Tdark"/>
</dbReference>
<dbReference type="PRO" id="PR:Q9Y5E5"/>
<dbReference type="Proteomes" id="UP000005640">
    <property type="component" value="Chromosome 5"/>
</dbReference>
<dbReference type="RNAct" id="Q9Y5E5">
    <property type="molecule type" value="protein"/>
</dbReference>
<dbReference type="Bgee" id="ENSG00000081818">
    <property type="expression patterns" value="Expressed in male germ line stem cell (sensu Vertebrata) in testis and 129 other cell types or tissues"/>
</dbReference>
<dbReference type="GO" id="GO:0016020">
    <property type="term" value="C:membrane"/>
    <property type="evidence" value="ECO:0000303"/>
    <property type="project" value="UniProtKB"/>
</dbReference>
<dbReference type="GO" id="GO:0005886">
    <property type="term" value="C:plasma membrane"/>
    <property type="evidence" value="ECO:0000318"/>
    <property type="project" value="GO_Central"/>
</dbReference>
<dbReference type="GO" id="GO:0045202">
    <property type="term" value="C:synapse"/>
    <property type="evidence" value="ECO:0007669"/>
    <property type="project" value="GOC"/>
</dbReference>
<dbReference type="GO" id="GO:0005509">
    <property type="term" value="F:calcium ion binding"/>
    <property type="evidence" value="ECO:0007669"/>
    <property type="project" value="InterPro"/>
</dbReference>
<dbReference type="GO" id="GO:0016339">
    <property type="term" value="P:calcium-dependent cell-cell adhesion via plasma membrane cell adhesion molecules"/>
    <property type="evidence" value="ECO:0000303"/>
    <property type="project" value="UniProtKB"/>
</dbReference>
<dbReference type="GO" id="GO:0007155">
    <property type="term" value="P:cell adhesion"/>
    <property type="evidence" value="ECO:0000318"/>
    <property type="project" value="GO_Central"/>
</dbReference>
<dbReference type="GO" id="GO:0007268">
    <property type="term" value="P:chemical synaptic transmission"/>
    <property type="evidence" value="ECO:0000304"/>
    <property type="project" value="UniProtKB"/>
</dbReference>
<dbReference type="GO" id="GO:0007156">
    <property type="term" value="P:homophilic cell adhesion via plasma membrane adhesion molecules"/>
    <property type="evidence" value="ECO:0007669"/>
    <property type="project" value="InterPro"/>
</dbReference>
<dbReference type="GO" id="GO:0007399">
    <property type="term" value="P:nervous system development"/>
    <property type="evidence" value="ECO:0000304"/>
    <property type="project" value="ProtInc"/>
</dbReference>
<dbReference type="GO" id="GO:0007416">
    <property type="term" value="P:synapse assembly"/>
    <property type="evidence" value="ECO:0000304"/>
    <property type="project" value="UniProtKB"/>
</dbReference>
<dbReference type="CDD" id="cd11304">
    <property type="entry name" value="Cadherin_repeat"/>
    <property type="match status" value="5"/>
</dbReference>
<dbReference type="FunFam" id="2.60.40.60:FF:000001">
    <property type="entry name" value="Protocadherin alpha 2"/>
    <property type="match status" value="1"/>
</dbReference>
<dbReference type="FunFam" id="2.60.40.60:FF:000002">
    <property type="entry name" value="Protocadherin alpha 2"/>
    <property type="match status" value="1"/>
</dbReference>
<dbReference type="FunFam" id="2.60.40.60:FF:000006">
    <property type="entry name" value="Protocadherin alpha 2"/>
    <property type="match status" value="1"/>
</dbReference>
<dbReference type="FunFam" id="2.60.40.60:FF:000046">
    <property type="entry name" value="Protocadherin beta 5"/>
    <property type="match status" value="1"/>
</dbReference>
<dbReference type="FunFam" id="2.60.40.60:FF:000309">
    <property type="entry name" value="Protocadherin beta-8"/>
    <property type="match status" value="1"/>
</dbReference>
<dbReference type="FunFam" id="2.60.40.60:FF:000018">
    <property type="entry name" value="Protocadherin gamma c3"/>
    <property type="match status" value="1"/>
</dbReference>
<dbReference type="Gene3D" id="2.60.40.60">
    <property type="entry name" value="Cadherins"/>
    <property type="match status" value="6"/>
</dbReference>
<dbReference type="InterPro" id="IPR002126">
    <property type="entry name" value="Cadherin-like_dom"/>
</dbReference>
<dbReference type="InterPro" id="IPR015919">
    <property type="entry name" value="Cadherin-like_sf"/>
</dbReference>
<dbReference type="InterPro" id="IPR032455">
    <property type="entry name" value="Cadherin_C"/>
</dbReference>
<dbReference type="InterPro" id="IPR020894">
    <property type="entry name" value="Cadherin_CS"/>
</dbReference>
<dbReference type="InterPro" id="IPR013164">
    <property type="entry name" value="Cadherin_N"/>
</dbReference>
<dbReference type="InterPro" id="IPR050174">
    <property type="entry name" value="Protocadherin/Cadherin-CA"/>
</dbReference>
<dbReference type="PANTHER" id="PTHR24028">
    <property type="entry name" value="CADHERIN-87A"/>
    <property type="match status" value="1"/>
</dbReference>
<dbReference type="PANTHER" id="PTHR24028:SF55">
    <property type="entry name" value="PROTOCADHERIN BETA-4"/>
    <property type="match status" value="1"/>
</dbReference>
<dbReference type="Pfam" id="PF00028">
    <property type="entry name" value="Cadherin"/>
    <property type="match status" value="5"/>
</dbReference>
<dbReference type="Pfam" id="PF08266">
    <property type="entry name" value="Cadherin_2"/>
    <property type="match status" value="1"/>
</dbReference>
<dbReference type="Pfam" id="PF16492">
    <property type="entry name" value="Cadherin_C_2"/>
    <property type="match status" value="1"/>
</dbReference>
<dbReference type="PRINTS" id="PR00205">
    <property type="entry name" value="CADHERIN"/>
</dbReference>
<dbReference type="SMART" id="SM00112">
    <property type="entry name" value="CA"/>
    <property type="match status" value="5"/>
</dbReference>
<dbReference type="SUPFAM" id="SSF49313">
    <property type="entry name" value="Cadherin-like"/>
    <property type="match status" value="6"/>
</dbReference>
<dbReference type="PROSITE" id="PS00232">
    <property type="entry name" value="CADHERIN_1"/>
    <property type="match status" value="5"/>
</dbReference>
<dbReference type="PROSITE" id="PS50268">
    <property type="entry name" value="CADHERIN_2"/>
    <property type="match status" value="5"/>
</dbReference>
<sequence length="795" mass="87270">MKKLGRIHPNRQVLAFILMVFLSQVRLEPIRYSVLEETESGSFVAHLAKDLGLGIGELASRSARVLSDDDKQRLQLDRQTGDLLLREKLDREELCGPIEPCVLHFQVFLEMPVQFFQGELLIQDINDHSPIFPEREVLLKILENSQPGTLFPLLIAEDLDVGSNGLQKYTISPNSHFHILTRNHSEGKKYPDLVQDKPLDREEQPEFSLTLVALDGGSPPRSGTVMVRILIMDINDNAPEFVHTPYGVQVLENSPLDSPIVRVLARDIDAGNFGSVSYGLFQASDEIKQTFSINEVTGEILLKKKLDFEKIKSYHVEIEATDGGGLSGKGTVVIEVVDVNDNPPELIISSLTSSIPENAPETVVSIFRIRDRDSGENGKMICSIPDNLPFILKPTLKNFYTLVTERPLDRETSAEYNITIAVTDLGTPRLKTQQNITVQVSDVNDNAPAFTQTSYTLFVRENNSPALHIGSVSATDRDSGTNAQVTYSLLPPQDPHLPLASLVSINADNGHLFALRSLDYEALQAFEFRVGASDRGSPALSSEALVRVLVLDTNDNSPFVLYPLQNGSAPCTELVPRAAEPGYLVTKVVAVDGDSGQNAWLSYQLLKATEPGLFGVWAHNGEVRTARLLSERDAAKHRLVVLVKDNGEPPRSATATLHVLLVDGFSQPYLPLPEAAPAQAQADSLTVYLVVALASVSSLFLFSVLLFVAVRLCRRSRAASVGRCSVPEGPFPGHLVDVSGTGTLSQSYQYEVCLTGDSGTGEFKFLKPIFPNLLVQDTGREVKENPKFRNSLVFS</sequence>
<accession>Q9Y5E5</accession>
<accession>Q4V761</accession>
<keyword id="KW-0106">Calcium</keyword>
<keyword id="KW-0130">Cell adhesion</keyword>
<keyword id="KW-1003">Cell membrane</keyword>
<keyword id="KW-0325">Glycoprotein</keyword>
<keyword id="KW-0472">Membrane</keyword>
<keyword id="KW-1267">Proteomics identification</keyword>
<keyword id="KW-1185">Reference proteome</keyword>
<keyword id="KW-0677">Repeat</keyword>
<keyword id="KW-0732">Signal</keyword>
<keyword id="KW-0812">Transmembrane</keyword>
<keyword id="KW-1133">Transmembrane helix</keyword>
<reference key="1">
    <citation type="journal article" date="1999" name="Cell">
        <title>A striking organization of a large family of human neural cadherin-like cell adhesion genes.</title>
        <authorList>
            <person name="Wu Q."/>
            <person name="Maniatis T."/>
        </authorList>
    </citation>
    <scope>NUCLEOTIDE SEQUENCE [MRNA]</scope>
</reference>
<reference key="2">
    <citation type="journal article" date="2001" name="FEBS Lett.">
        <title>The human and murine protocadherin-beta one-exon gene families show high evolutionary conservation, despite the difference in gene number.</title>
        <authorList>
            <person name="Vanhalst K."/>
            <person name="Kools P."/>
            <person name="Vanden Eynde E."/>
            <person name="van Roy F."/>
        </authorList>
    </citation>
    <scope>NUCLEOTIDE SEQUENCE [MRNA]</scope>
</reference>
<reference key="3">
    <citation type="journal article" date="2004" name="Genome Res.">
        <title>The status, quality, and expansion of the NIH full-length cDNA project: the Mammalian Gene Collection (MGC).</title>
        <authorList>
            <consortium name="The MGC Project Team"/>
        </authorList>
    </citation>
    <scope>NUCLEOTIDE SEQUENCE [LARGE SCALE MRNA]</scope>
</reference>
<gene>
    <name type="primary">PCDHB4</name>
</gene>